<organism>
    <name type="scientific">Corynebacterium efficiens (strain DSM 44549 / YS-314 / AJ 12310 / JCM 11189 / NBRC 100395)</name>
    <dbReference type="NCBI Taxonomy" id="196164"/>
    <lineage>
        <taxon>Bacteria</taxon>
        <taxon>Bacillati</taxon>
        <taxon>Actinomycetota</taxon>
        <taxon>Actinomycetes</taxon>
        <taxon>Mycobacteriales</taxon>
        <taxon>Corynebacteriaceae</taxon>
        <taxon>Corynebacterium</taxon>
    </lineage>
</organism>
<feature type="chain" id="PRO_0000141434" description="4-hydroxy-tetrahydrodipicolinate reductase">
    <location>
        <begin position="1"/>
        <end position="248"/>
    </location>
</feature>
<feature type="active site" description="Proton donor/acceptor" evidence="1">
    <location>
        <position position="134"/>
    </location>
</feature>
<feature type="active site" description="Proton donor" evidence="1">
    <location>
        <position position="138"/>
    </location>
</feature>
<feature type="binding site" evidence="1">
    <location>
        <begin position="9"/>
        <end position="14"/>
    </location>
    <ligand>
        <name>NAD(+)</name>
        <dbReference type="ChEBI" id="CHEBI:57540"/>
    </ligand>
</feature>
<feature type="binding site" evidence="1">
    <location>
        <begin position="77"/>
        <end position="79"/>
    </location>
    <ligand>
        <name>NAD(+)</name>
        <dbReference type="ChEBI" id="CHEBI:57540"/>
    </ligand>
</feature>
<feature type="binding site" evidence="1">
    <location>
        <begin position="104"/>
        <end position="107"/>
    </location>
    <ligand>
        <name>NAD(+)</name>
        <dbReference type="ChEBI" id="CHEBI:57540"/>
    </ligand>
</feature>
<feature type="binding site" evidence="1">
    <location>
        <position position="135"/>
    </location>
    <ligand>
        <name>(S)-2,3,4,5-tetrahydrodipicolinate</name>
        <dbReference type="ChEBI" id="CHEBI:16845"/>
    </ligand>
</feature>
<feature type="binding site" evidence="1">
    <location>
        <begin position="144"/>
        <end position="145"/>
    </location>
    <ligand>
        <name>(S)-2,3,4,5-tetrahydrodipicolinate</name>
        <dbReference type="ChEBI" id="CHEBI:16845"/>
    </ligand>
</feature>
<comment type="function">
    <text evidence="1">Catalyzes the conversion of 4-hydroxy-tetrahydrodipicolinate (HTPA) to tetrahydrodipicolinate.</text>
</comment>
<comment type="catalytic activity">
    <reaction evidence="1">
        <text>(S)-2,3,4,5-tetrahydrodipicolinate + NAD(+) + H2O = (2S,4S)-4-hydroxy-2,3,4,5-tetrahydrodipicolinate + NADH + H(+)</text>
        <dbReference type="Rhea" id="RHEA:35323"/>
        <dbReference type="ChEBI" id="CHEBI:15377"/>
        <dbReference type="ChEBI" id="CHEBI:15378"/>
        <dbReference type="ChEBI" id="CHEBI:16845"/>
        <dbReference type="ChEBI" id="CHEBI:57540"/>
        <dbReference type="ChEBI" id="CHEBI:57945"/>
        <dbReference type="ChEBI" id="CHEBI:67139"/>
        <dbReference type="EC" id="1.17.1.8"/>
    </reaction>
</comment>
<comment type="catalytic activity">
    <reaction evidence="1">
        <text>(S)-2,3,4,5-tetrahydrodipicolinate + NADP(+) + H2O = (2S,4S)-4-hydroxy-2,3,4,5-tetrahydrodipicolinate + NADPH + H(+)</text>
        <dbReference type="Rhea" id="RHEA:35331"/>
        <dbReference type="ChEBI" id="CHEBI:15377"/>
        <dbReference type="ChEBI" id="CHEBI:15378"/>
        <dbReference type="ChEBI" id="CHEBI:16845"/>
        <dbReference type="ChEBI" id="CHEBI:57783"/>
        <dbReference type="ChEBI" id="CHEBI:58349"/>
        <dbReference type="ChEBI" id="CHEBI:67139"/>
        <dbReference type="EC" id="1.17.1.8"/>
    </reaction>
</comment>
<comment type="pathway">
    <text evidence="1">Amino-acid biosynthesis; L-lysine biosynthesis via DAP pathway; (S)-tetrahydrodipicolinate from L-aspartate: step 4/4.</text>
</comment>
<comment type="subcellular location">
    <subcellularLocation>
        <location evidence="1">Cytoplasm</location>
    </subcellularLocation>
</comment>
<comment type="similarity">
    <text evidence="1">Belongs to the DapB family.</text>
</comment>
<comment type="caution">
    <text evidence="2">Was originally thought to be a dihydrodipicolinate reductase (DHDPR), catalyzing the conversion of dihydrodipicolinate to tetrahydrodipicolinate. However, it was shown in E.coli that the substrate of the enzymatic reaction is not dihydrodipicolinate (DHDP) but in fact (2S,4S)-4-hydroxy-2,3,4,5-tetrahydrodipicolinic acid (HTPA), the product released by the DapA-catalyzed reaction.</text>
</comment>
<comment type="sequence caution" evidence="2">
    <conflict type="erroneous initiation">
        <sequence resource="EMBL-CDS" id="BAC18676"/>
    </conflict>
</comment>
<accession>Q8RQN0</accession>
<evidence type="ECO:0000255" key="1">
    <source>
        <dbReference type="HAMAP-Rule" id="MF_00102"/>
    </source>
</evidence>
<evidence type="ECO:0000305" key="2"/>
<reference key="1">
    <citation type="submission" date="2002-04" db="EMBL/GenBank/DDBJ databases">
        <title>dapB, dapA of Corynebacterium efficiens.</title>
        <authorList>
            <person name="Itaya H."/>
            <person name="Kimura E."/>
            <person name="Kawahara Y."/>
            <person name="Sugimoto S."/>
        </authorList>
    </citation>
    <scope>NUCLEOTIDE SEQUENCE [GENOMIC DNA]</scope>
    <source>
        <strain>DSM 44549 / YS-314 / AJ 12310 / JCM 11189 / NBRC 100395</strain>
    </source>
</reference>
<reference key="2">
    <citation type="journal article" date="2003" name="Genome Res.">
        <title>Comparative complete genome sequence analysis of the amino acid replacements responsible for the thermostability of Corynebacterium efficiens.</title>
        <authorList>
            <person name="Nishio Y."/>
            <person name="Nakamura Y."/>
            <person name="Kawarabayasi Y."/>
            <person name="Usuda Y."/>
            <person name="Kimura E."/>
            <person name="Sugimoto S."/>
            <person name="Matsui K."/>
            <person name="Yamagishi A."/>
            <person name="Kikuchi H."/>
            <person name="Ikeo K."/>
            <person name="Gojobori T."/>
        </authorList>
    </citation>
    <scope>NUCLEOTIDE SEQUENCE [LARGE SCALE GENOMIC DNA]</scope>
    <source>
        <strain>DSM 44549 / YS-314 / AJ 12310 / JCM 11189 / NBRC 100395</strain>
    </source>
</reference>
<sequence>MAIKVGVLGAKGRVGQTIVAAVNDTDDLELVAEVDHDDDLSLLVDSGAEVVVDFTTPNAVMGNLEFCINNGISAVVGTTGFDEDRLAQVRSWCASNEGVGVLIAPNFAISAVLTMVFARQAARFFESAEVIELHHPNKLDAPSGTAIHTAQGIAEARREAGMAAQPDATEQALDGSRGADVDGIPVHAVRMSGMVAHEAVIFGTQGQTLTIKQDSYDRNSFAPGVLVGIRNIAQHPGLTVGLEHYLDL</sequence>
<dbReference type="EC" id="1.17.1.8" evidence="1"/>
<dbReference type="EMBL" id="AB083130">
    <property type="protein sequence ID" value="BAB88821.1"/>
    <property type="molecule type" value="Genomic_DNA"/>
</dbReference>
<dbReference type="EMBL" id="BA000035">
    <property type="protein sequence ID" value="BAC18676.1"/>
    <property type="status" value="ALT_INIT"/>
    <property type="molecule type" value="Genomic_DNA"/>
</dbReference>
<dbReference type="RefSeq" id="WP_006767864.1">
    <property type="nucleotide sequence ID" value="NC_004369.1"/>
</dbReference>
<dbReference type="SMR" id="Q8RQN0"/>
<dbReference type="STRING" id="196164.gene:10742294"/>
<dbReference type="KEGG" id="cef:CE1866"/>
<dbReference type="eggNOG" id="COG0289">
    <property type="taxonomic scope" value="Bacteria"/>
</dbReference>
<dbReference type="HOGENOM" id="CLU_047479_0_1_11"/>
<dbReference type="OrthoDB" id="9790352at2"/>
<dbReference type="UniPathway" id="UPA00034">
    <property type="reaction ID" value="UER00018"/>
</dbReference>
<dbReference type="Proteomes" id="UP000001409">
    <property type="component" value="Chromosome"/>
</dbReference>
<dbReference type="GO" id="GO:0005829">
    <property type="term" value="C:cytosol"/>
    <property type="evidence" value="ECO:0007669"/>
    <property type="project" value="TreeGrafter"/>
</dbReference>
<dbReference type="GO" id="GO:0008839">
    <property type="term" value="F:4-hydroxy-tetrahydrodipicolinate reductase"/>
    <property type="evidence" value="ECO:0007669"/>
    <property type="project" value="UniProtKB-EC"/>
</dbReference>
<dbReference type="GO" id="GO:0051287">
    <property type="term" value="F:NAD binding"/>
    <property type="evidence" value="ECO:0007669"/>
    <property type="project" value="UniProtKB-UniRule"/>
</dbReference>
<dbReference type="GO" id="GO:0050661">
    <property type="term" value="F:NADP binding"/>
    <property type="evidence" value="ECO:0007669"/>
    <property type="project" value="UniProtKB-UniRule"/>
</dbReference>
<dbReference type="GO" id="GO:0016726">
    <property type="term" value="F:oxidoreductase activity, acting on CH or CH2 groups, NAD or NADP as acceptor"/>
    <property type="evidence" value="ECO:0007669"/>
    <property type="project" value="UniProtKB-UniRule"/>
</dbReference>
<dbReference type="GO" id="GO:0019877">
    <property type="term" value="P:diaminopimelate biosynthetic process"/>
    <property type="evidence" value="ECO:0007669"/>
    <property type="project" value="UniProtKB-UniRule"/>
</dbReference>
<dbReference type="GO" id="GO:0009089">
    <property type="term" value="P:lysine biosynthetic process via diaminopimelate"/>
    <property type="evidence" value="ECO:0007669"/>
    <property type="project" value="UniProtKB-UniRule"/>
</dbReference>
<dbReference type="CDD" id="cd02274">
    <property type="entry name" value="DHDPR_N"/>
    <property type="match status" value="1"/>
</dbReference>
<dbReference type="FunFam" id="3.30.360.10:FF:000009">
    <property type="entry name" value="4-hydroxy-tetrahydrodipicolinate reductase"/>
    <property type="match status" value="1"/>
</dbReference>
<dbReference type="Gene3D" id="3.30.360.10">
    <property type="entry name" value="Dihydrodipicolinate Reductase, domain 2"/>
    <property type="match status" value="1"/>
</dbReference>
<dbReference type="Gene3D" id="3.40.50.720">
    <property type="entry name" value="NAD(P)-binding Rossmann-like Domain"/>
    <property type="match status" value="1"/>
</dbReference>
<dbReference type="HAMAP" id="MF_00102">
    <property type="entry name" value="DapB"/>
    <property type="match status" value="1"/>
</dbReference>
<dbReference type="InterPro" id="IPR022663">
    <property type="entry name" value="DapB_C"/>
</dbReference>
<dbReference type="InterPro" id="IPR000846">
    <property type="entry name" value="DapB_N"/>
</dbReference>
<dbReference type="InterPro" id="IPR022664">
    <property type="entry name" value="DapB_N_CS"/>
</dbReference>
<dbReference type="InterPro" id="IPR023940">
    <property type="entry name" value="DHDPR_bac"/>
</dbReference>
<dbReference type="InterPro" id="IPR036291">
    <property type="entry name" value="NAD(P)-bd_dom_sf"/>
</dbReference>
<dbReference type="NCBIfam" id="TIGR00036">
    <property type="entry name" value="dapB"/>
    <property type="match status" value="1"/>
</dbReference>
<dbReference type="PANTHER" id="PTHR20836:SF0">
    <property type="entry name" value="4-HYDROXY-TETRAHYDRODIPICOLINATE REDUCTASE 1, CHLOROPLASTIC-RELATED"/>
    <property type="match status" value="1"/>
</dbReference>
<dbReference type="PANTHER" id="PTHR20836">
    <property type="entry name" value="DIHYDRODIPICOLINATE REDUCTASE"/>
    <property type="match status" value="1"/>
</dbReference>
<dbReference type="Pfam" id="PF05173">
    <property type="entry name" value="DapB_C"/>
    <property type="match status" value="1"/>
</dbReference>
<dbReference type="Pfam" id="PF01113">
    <property type="entry name" value="DapB_N"/>
    <property type="match status" value="1"/>
</dbReference>
<dbReference type="PIRSF" id="PIRSF000161">
    <property type="entry name" value="DHPR"/>
    <property type="match status" value="1"/>
</dbReference>
<dbReference type="SUPFAM" id="SSF55347">
    <property type="entry name" value="Glyceraldehyde-3-phosphate dehydrogenase-like, C-terminal domain"/>
    <property type="match status" value="1"/>
</dbReference>
<dbReference type="SUPFAM" id="SSF51735">
    <property type="entry name" value="NAD(P)-binding Rossmann-fold domains"/>
    <property type="match status" value="1"/>
</dbReference>
<dbReference type="PROSITE" id="PS01298">
    <property type="entry name" value="DAPB"/>
    <property type="match status" value="1"/>
</dbReference>
<name>DAPB_COREF</name>
<gene>
    <name evidence="1" type="primary">dapB</name>
    <name type="ordered locus">CE1866</name>
</gene>
<protein>
    <recommendedName>
        <fullName evidence="1">4-hydroxy-tetrahydrodipicolinate reductase</fullName>
        <shortName evidence="1">HTPA reductase</shortName>
        <ecNumber evidence="1">1.17.1.8</ecNumber>
    </recommendedName>
</protein>
<keyword id="KW-0028">Amino-acid biosynthesis</keyword>
<keyword id="KW-0963">Cytoplasm</keyword>
<keyword id="KW-0220">Diaminopimelate biosynthesis</keyword>
<keyword id="KW-0457">Lysine biosynthesis</keyword>
<keyword id="KW-0520">NAD</keyword>
<keyword id="KW-0521">NADP</keyword>
<keyword id="KW-0560">Oxidoreductase</keyword>
<keyword id="KW-1185">Reference proteome</keyword>
<proteinExistence type="inferred from homology"/>